<reference key="1">
    <citation type="submission" date="2008-12" db="EMBL/GenBank/DDBJ databases">
        <title>Complete sequence of Chloroflexus aggregans DSM 9485.</title>
        <authorList>
            <consortium name="US DOE Joint Genome Institute"/>
            <person name="Lucas S."/>
            <person name="Copeland A."/>
            <person name="Lapidus A."/>
            <person name="Glavina del Rio T."/>
            <person name="Dalin E."/>
            <person name="Tice H."/>
            <person name="Pitluck S."/>
            <person name="Foster B."/>
            <person name="Larimer F."/>
            <person name="Land M."/>
            <person name="Hauser L."/>
            <person name="Kyrpides N."/>
            <person name="Mikhailova N."/>
            <person name="Bryant D.A."/>
            <person name="Richardson P."/>
        </authorList>
    </citation>
    <scope>NUCLEOTIDE SEQUENCE [LARGE SCALE GENOMIC DNA]</scope>
    <source>
        <strain>MD-66 / DSM 9485</strain>
    </source>
</reference>
<name>OBG_CHLAD</name>
<proteinExistence type="inferred from homology"/>
<keyword id="KW-0963">Cytoplasm</keyword>
<keyword id="KW-0342">GTP-binding</keyword>
<keyword id="KW-0378">Hydrolase</keyword>
<keyword id="KW-0460">Magnesium</keyword>
<keyword id="KW-0479">Metal-binding</keyword>
<keyword id="KW-0547">Nucleotide-binding</keyword>
<sequence>MATGTDFFDQATIVVRAGNGGNGAATFRREKYVPRGGPNGGDGGRGGHVYLIADPEYNTLLHFRYQRKFVAENGGHGGKNAMHGRNGADVYVPVPPGTVVRATINGVTYTVDLARPGQRLLAARGGRGGLGNIHFTTPTRQAPRLAELGEPGQELTLELELKMLADVGLVGFPNAGKSTLLSVISAARPKIAAYPFTTLTPNLGIVEVGVQRFVVADIPGLIEGAHAGVGLGHDFLRHIERTRLLIHIIDAAGVDGRTPWDDYEQINTELRLYQPELAQRKQVVALNKADLPAAQANLPILRERLPVAPEDLFVISAATRAGIEPLLQRVAELLRADPPPQRDPVDPDEPPLEWPLPPVDENAFTVEREGDAFRVRGVKIERLIAMSNLEQDEAIDRIQRVLEASGINEALMAAGVQDGDVVRIGRAELVWDDSGQHAL</sequence>
<comment type="function">
    <text evidence="1">An essential GTPase which binds GTP, GDP and possibly (p)ppGpp with moderate affinity, with high nucleotide exchange rates and a fairly low GTP hydrolysis rate. Plays a role in control of the cell cycle, stress response, ribosome biogenesis and in those bacteria that undergo differentiation, in morphogenesis control.</text>
</comment>
<comment type="cofactor">
    <cofactor evidence="1">
        <name>Mg(2+)</name>
        <dbReference type="ChEBI" id="CHEBI:18420"/>
    </cofactor>
</comment>
<comment type="subunit">
    <text evidence="1">Monomer.</text>
</comment>
<comment type="subcellular location">
    <subcellularLocation>
        <location evidence="1">Cytoplasm</location>
    </subcellularLocation>
</comment>
<comment type="similarity">
    <text evidence="1">Belongs to the TRAFAC class OBG-HflX-like GTPase superfamily. OBG GTPase family.</text>
</comment>
<protein>
    <recommendedName>
        <fullName evidence="1">GTPase Obg</fullName>
        <ecNumber evidence="1">3.6.5.-</ecNumber>
    </recommendedName>
    <alternativeName>
        <fullName evidence="1">GTP-binding protein Obg</fullName>
    </alternativeName>
</protein>
<feature type="chain" id="PRO_0000385828" description="GTPase Obg">
    <location>
        <begin position="1"/>
        <end position="439"/>
    </location>
</feature>
<feature type="domain" description="Obg" evidence="3">
    <location>
        <begin position="5"/>
        <end position="164"/>
    </location>
</feature>
<feature type="domain" description="OBG-type G" evidence="1">
    <location>
        <begin position="165"/>
        <end position="335"/>
    </location>
</feature>
<feature type="domain" description="OCT" evidence="2">
    <location>
        <begin position="356"/>
        <end position="433"/>
    </location>
</feature>
<feature type="region of interest" description="Disordered" evidence="4">
    <location>
        <begin position="337"/>
        <end position="359"/>
    </location>
</feature>
<feature type="binding site" evidence="1">
    <location>
        <begin position="171"/>
        <end position="178"/>
    </location>
    <ligand>
        <name>GTP</name>
        <dbReference type="ChEBI" id="CHEBI:37565"/>
    </ligand>
</feature>
<feature type="binding site" evidence="1">
    <location>
        <position position="178"/>
    </location>
    <ligand>
        <name>Mg(2+)</name>
        <dbReference type="ChEBI" id="CHEBI:18420"/>
    </ligand>
</feature>
<feature type="binding site" evidence="1">
    <location>
        <begin position="196"/>
        <end position="200"/>
    </location>
    <ligand>
        <name>GTP</name>
        <dbReference type="ChEBI" id="CHEBI:37565"/>
    </ligand>
</feature>
<feature type="binding site" evidence="1">
    <location>
        <position position="198"/>
    </location>
    <ligand>
        <name>Mg(2+)</name>
        <dbReference type="ChEBI" id="CHEBI:18420"/>
    </ligand>
</feature>
<feature type="binding site" evidence="1">
    <location>
        <begin position="217"/>
        <end position="220"/>
    </location>
    <ligand>
        <name>GTP</name>
        <dbReference type="ChEBI" id="CHEBI:37565"/>
    </ligand>
</feature>
<feature type="binding site" evidence="1">
    <location>
        <begin position="287"/>
        <end position="290"/>
    </location>
    <ligand>
        <name>GTP</name>
        <dbReference type="ChEBI" id="CHEBI:37565"/>
    </ligand>
</feature>
<feature type="binding site" evidence="1">
    <location>
        <begin position="316"/>
        <end position="318"/>
    </location>
    <ligand>
        <name>GTP</name>
        <dbReference type="ChEBI" id="CHEBI:37565"/>
    </ligand>
</feature>
<organism>
    <name type="scientific">Chloroflexus aggregans (strain MD-66 / DSM 9485)</name>
    <dbReference type="NCBI Taxonomy" id="326427"/>
    <lineage>
        <taxon>Bacteria</taxon>
        <taxon>Bacillati</taxon>
        <taxon>Chloroflexota</taxon>
        <taxon>Chloroflexia</taxon>
        <taxon>Chloroflexales</taxon>
        <taxon>Chloroflexineae</taxon>
        <taxon>Chloroflexaceae</taxon>
        <taxon>Chloroflexus</taxon>
    </lineage>
</organism>
<evidence type="ECO:0000255" key="1">
    <source>
        <dbReference type="HAMAP-Rule" id="MF_01454"/>
    </source>
</evidence>
<evidence type="ECO:0000255" key="2">
    <source>
        <dbReference type="PROSITE-ProRule" id="PRU01229"/>
    </source>
</evidence>
<evidence type="ECO:0000255" key="3">
    <source>
        <dbReference type="PROSITE-ProRule" id="PRU01231"/>
    </source>
</evidence>
<evidence type="ECO:0000256" key="4">
    <source>
        <dbReference type="SAM" id="MobiDB-lite"/>
    </source>
</evidence>
<accession>B8GA36</accession>
<dbReference type="EC" id="3.6.5.-" evidence="1"/>
<dbReference type="EMBL" id="CP001337">
    <property type="protein sequence ID" value="ACL24551.1"/>
    <property type="molecule type" value="Genomic_DNA"/>
</dbReference>
<dbReference type="RefSeq" id="WP_015940410.1">
    <property type="nucleotide sequence ID" value="NC_011831.1"/>
</dbReference>
<dbReference type="SMR" id="B8GA36"/>
<dbReference type="STRING" id="326427.Cagg_1650"/>
<dbReference type="KEGG" id="cag:Cagg_1650"/>
<dbReference type="eggNOG" id="COG0536">
    <property type="taxonomic scope" value="Bacteria"/>
</dbReference>
<dbReference type="HOGENOM" id="CLU_011747_2_1_0"/>
<dbReference type="OrthoDB" id="9807318at2"/>
<dbReference type="Proteomes" id="UP000002508">
    <property type="component" value="Chromosome"/>
</dbReference>
<dbReference type="GO" id="GO:0005737">
    <property type="term" value="C:cytoplasm"/>
    <property type="evidence" value="ECO:0007669"/>
    <property type="project" value="UniProtKB-SubCell"/>
</dbReference>
<dbReference type="GO" id="GO:0005525">
    <property type="term" value="F:GTP binding"/>
    <property type="evidence" value="ECO:0007669"/>
    <property type="project" value="UniProtKB-UniRule"/>
</dbReference>
<dbReference type="GO" id="GO:0003924">
    <property type="term" value="F:GTPase activity"/>
    <property type="evidence" value="ECO:0007669"/>
    <property type="project" value="UniProtKB-UniRule"/>
</dbReference>
<dbReference type="GO" id="GO:0000287">
    <property type="term" value="F:magnesium ion binding"/>
    <property type="evidence" value="ECO:0007669"/>
    <property type="project" value="InterPro"/>
</dbReference>
<dbReference type="GO" id="GO:0042254">
    <property type="term" value="P:ribosome biogenesis"/>
    <property type="evidence" value="ECO:0007669"/>
    <property type="project" value="UniProtKB-UniRule"/>
</dbReference>
<dbReference type="CDD" id="cd01898">
    <property type="entry name" value="Obg"/>
    <property type="match status" value="1"/>
</dbReference>
<dbReference type="FunFam" id="2.70.210.12:FF:000001">
    <property type="entry name" value="GTPase Obg"/>
    <property type="match status" value="1"/>
</dbReference>
<dbReference type="Gene3D" id="3.30.300.350">
    <property type="entry name" value="GTP-binding protein OBG, C-terminal domain"/>
    <property type="match status" value="1"/>
</dbReference>
<dbReference type="Gene3D" id="2.70.210.12">
    <property type="entry name" value="GTP1/OBG domain"/>
    <property type="match status" value="1"/>
</dbReference>
<dbReference type="Gene3D" id="3.40.50.300">
    <property type="entry name" value="P-loop containing nucleotide triphosphate hydrolases"/>
    <property type="match status" value="1"/>
</dbReference>
<dbReference type="HAMAP" id="MF_01454">
    <property type="entry name" value="GTPase_Obg"/>
    <property type="match status" value="1"/>
</dbReference>
<dbReference type="InterPro" id="IPR031167">
    <property type="entry name" value="G_OBG"/>
</dbReference>
<dbReference type="InterPro" id="IPR006073">
    <property type="entry name" value="GTP-bd"/>
</dbReference>
<dbReference type="InterPro" id="IPR014100">
    <property type="entry name" value="GTP-bd_Obg/CgtA"/>
</dbReference>
<dbReference type="InterPro" id="IPR036346">
    <property type="entry name" value="GTP-bd_prot_GTP1/OBG_C_sf"/>
</dbReference>
<dbReference type="InterPro" id="IPR006074">
    <property type="entry name" value="GTP1-OBG_CS"/>
</dbReference>
<dbReference type="InterPro" id="IPR006169">
    <property type="entry name" value="GTP1_OBG_dom"/>
</dbReference>
<dbReference type="InterPro" id="IPR036726">
    <property type="entry name" value="GTP1_OBG_dom_sf"/>
</dbReference>
<dbReference type="InterPro" id="IPR045086">
    <property type="entry name" value="OBG_GTPase"/>
</dbReference>
<dbReference type="InterPro" id="IPR015349">
    <property type="entry name" value="OCT_dom"/>
</dbReference>
<dbReference type="InterPro" id="IPR027417">
    <property type="entry name" value="P-loop_NTPase"/>
</dbReference>
<dbReference type="NCBIfam" id="TIGR02729">
    <property type="entry name" value="Obg_CgtA"/>
    <property type="match status" value="1"/>
</dbReference>
<dbReference type="NCBIfam" id="TIGR03595">
    <property type="entry name" value="Obg_CgtA_exten"/>
    <property type="match status" value="1"/>
</dbReference>
<dbReference type="NCBIfam" id="NF008954">
    <property type="entry name" value="PRK12296.1"/>
    <property type="match status" value="1"/>
</dbReference>
<dbReference type="NCBIfam" id="NF008955">
    <property type="entry name" value="PRK12297.1"/>
    <property type="match status" value="1"/>
</dbReference>
<dbReference type="NCBIfam" id="NF008956">
    <property type="entry name" value="PRK12299.1"/>
    <property type="match status" value="1"/>
</dbReference>
<dbReference type="PANTHER" id="PTHR11702">
    <property type="entry name" value="DEVELOPMENTALLY REGULATED GTP-BINDING PROTEIN-RELATED"/>
    <property type="match status" value="1"/>
</dbReference>
<dbReference type="PANTHER" id="PTHR11702:SF31">
    <property type="entry name" value="MITOCHONDRIAL RIBOSOME-ASSOCIATED GTPASE 2"/>
    <property type="match status" value="1"/>
</dbReference>
<dbReference type="Pfam" id="PF09269">
    <property type="entry name" value="DUF1967"/>
    <property type="match status" value="1"/>
</dbReference>
<dbReference type="Pfam" id="PF01018">
    <property type="entry name" value="GTP1_OBG"/>
    <property type="match status" value="1"/>
</dbReference>
<dbReference type="Pfam" id="PF01926">
    <property type="entry name" value="MMR_HSR1"/>
    <property type="match status" value="1"/>
</dbReference>
<dbReference type="PRINTS" id="PR00326">
    <property type="entry name" value="GTP1OBG"/>
</dbReference>
<dbReference type="SUPFAM" id="SSF102741">
    <property type="entry name" value="Obg GTP-binding protein C-terminal domain"/>
    <property type="match status" value="1"/>
</dbReference>
<dbReference type="SUPFAM" id="SSF82051">
    <property type="entry name" value="Obg GTP-binding protein N-terminal domain"/>
    <property type="match status" value="1"/>
</dbReference>
<dbReference type="SUPFAM" id="SSF52540">
    <property type="entry name" value="P-loop containing nucleoside triphosphate hydrolases"/>
    <property type="match status" value="1"/>
</dbReference>
<dbReference type="PROSITE" id="PS51710">
    <property type="entry name" value="G_OBG"/>
    <property type="match status" value="1"/>
</dbReference>
<dbReference type="PROSITE" id="PS00905">
    <property type="entry name" value="GTP1_OBG"/>
    <property type="match status" value="1"/>
</dbReference>
<dbReference type="PROSITE" id="PS51883">
    <property type="entry name" value="OBG"/>
    <property type="match status" value="1"/>
</dbReference>
<dbReference type="PROSITE" id="PS51881">
    <property type="entry name" value="OCT"/>
    <property type="match status" value="1"/>
</dbReference>
<gene>
    <name evidence="1" type="primary">obg</name>
    <name type="ordered locus">Cagg_1650</name>
</gene>